<name>MDTB_ECO45</name>
<dbReference type="EMBL" id="CU928161">
    <property type="protein sequence ID" value="CAR03460.1"/>
    <property type="molecule type" value="Genomic_DNA"/>
</dbReference>
<dbReference type="RefSeq" id="WP_001197878.1">
    <property type="nucleotide sequence ID" value="NC_011742.1"/>
</dbReference>
<dbReference type="SMR" id="B7ME87"/>
<dbReference type="KEGG" id="ecz:ECS88_2174"/>
<dbReference type="HOGENOM" id="CLU_002755_1_2_6"/>
<dbReference type="Proteomes" id="UP000000747">
    <property type="component" value="Chromosome"/>
</dbReference>
<dbReference type="GO" id="GO:0005886">
    <property type="term" value="C:plasma membrane"/>
    <property type="evidence" value="ECO:0007669"/>
    <property type="project" value="UniProtKB-SubCell"/>
</dbReference>
<dbReference type="GO" id="GO:0042910">
    <property type="term" value="F:xenobiotic transmembrane transporter activity"/>
    <property type="evidence" value="ECO:0007669"/>
    <property type="project" value="TreeGrafter"/>
</dbReference>
<dbReference type="FunFam" id="1.20.1640.10:FF:000001">
    <property type="entry name" value="Efflux pump membrane transporter"/>
    <property type="match status" value="1"/>
</dbReference>
<dbReference type="FunFam" id="3.30.70.1430:FF:000001">
    <property type="entry name" value="Efflux pump membrane transporter"/>
    <property type="match status" value="1"/>
</dbReference>
<dbReference type="FunFam" id="3.30.2090.10:FF:000003">
    <property type="entry name" value="Multidrug resistance protein MdtB"/>
    <property type="match status" value="1"/>
</dbReference>
<dbReference type="FunFam" id="3.30.2090.10:FF:000006">
    <property type="entry name" value="Multidrug resistance protein MdtB"/>
    <property type="match status" value="1"/>
</dbReference>
<dbReference type="Gene3D" id="3.30.70.1430">
    <property type="entry name" value="Multidrug efflux transporter AcrB pore domain"/>
    <property type="match status" value="2"/>
</dbReference>
<dbReference type="Gene3D" id="3.30.70.1440">
    <property type="entry name" value="Multidrug efflux transporter AcrB pore domain"/>
    <property type="match status" value="1"/>
</dbReference>
<dbReference type="Gene3D" id="3.30.70.1320">
    <property type="entry name" value="Multidrug efflux transporter AcrB pore domain like"/>
    <property type="match status" value="1"/>
</dbReference>
<dbReference type="Gene3D" id="3.30.2090.10">
    <property type="entry name" value="Multidrug efflux transporter AcrB TolC docking domain, DN and DC subdomains"/>
    <property type="match status" value="2"/>
</dbReference>
<dbReference type="Gene3D" id="1.20.1640.10">
    <property type="entry name" value="Multidrug efflux transporter AcrB transmembrane domain"/>
    <property type="match status" value="2"/>
</dbReference>
<dbReference type="HAMAP" id="MF_01423">
    <property type="entry name" value="MdtB"/>
    <property type="match status" value="1"/>
</dbReference>
<dbReference type="InterPro" id="IPR027463">
    <property type="entry name" value="AcrB_DN_DC_subdom"/>
</dbReference>
<dbReference type="InterPro" id="IPR001036">
    <property type="entry name" value="Acrflvin-R"/>
</dbReference>
<dbReference type="InterPro" id="IPR022831">
    <property type="entry name" value="Multidrug-R_MdtB"/>
</dbReference>
<dbReference type="NCBIfam" id="NF007798">
    <property type="entry name" value="PRK10503.1"/>
    <property type="match status" value="1"/>
</dbReference>
<dbReference type="NCBIfam" id="NF033617">
    <property type="entry name" value="RND_permease_2"/>
    <property type="match status" value="1"/>
</dbReference>
<dbReference type="PANTHER" id="PTHR32063">
    <property type="match status" value="1"/>
</dbReference>
<dbReference type="PANTHER" id="PTHR32063:SF21">
    <property type="entry name" value="MULTIDRUG RESISTANCE PROTEIN MDTB"/>
    <property type="match status" value="1"/>
</dbReference>
<dbReference type="Pfam" id="PF00873">
    <property type="entry name" value="ACR_tran"/>
    <property type="match status" value="1"/>
</dbReference>
<dbReference type="PRINTS" id="PR00702">
    <property type="entry name" value="ACRIFLAVINRP"/>
</dbReference>
<dbReference type="SUPFAM" id="SSF82693">
    <property type="entry name" value="Multidrug efflux transporter AcrB pore domain, PN1, PN2, PC1 and PC2 subdomains"/>
    <property type="match status" value="3"/>
</dbReference>
<dbReference type="SUPFAM" id="SSF82714">
    <property type="entry name" value="Multidrug efflux transporter AcrB TolC docking domain, DN and DC subdomains"/>
    <property type="match status" value="2"/>
</dbReference>
<dbReference type="SUPFAM" id="SSF82866">
    <property type="entry name" value="Multidrug efflux transporter AcrB transmembrane domain"/>
    <property type="match status" value="2"/>
</dbReference>
<feature type="chain" id="PRO_1000145647" description="Multidrug resistance protein MdtB">
    <location>
        <begin position="1"/>
        <end position="1040"/>
    </location>
</feature>
<feature type="transmembrane region" description="Helical" evidence="1">
    <location>
        <begin position="16"/>
        <end position="36"/>
    </location>
</feature>
<feature type="transmembrane region" description="Helical" evidence="1">
    <location>
        <begin position="347"/>
        <end position="367"/>
    </location>
</feature>
<feature type="transmembrane region" description="Helical" evidence="1">
    <location>
        <begin position="369"/>
        <end position="389"/>
    </location>
</feature>
<feature type="transmembrane region" description="Helical" evidence="1">
    <location>
        <begin position="396"/>
        <end position="416"/>
    </location>
</feature>
<feature type="transmembrane region" description="Helical" evidence="1">
    <location>
        <begin position="440"/>
        <end position="460"/>
    </location>
</feature>
<feature type="transmembrane region" description="Helical" evidence="1">
    <location>
        <begin position="472"/>
        <end position="492"/>
    </location>
</feature>
<feature type="transmembrane region" description="Helical" evidence="1">
    <location>
        <begin position="537"/>
        <end position="557"/>
    </location>
</feature>
<feature type="transmembrane region" description="Helical" evidence="1">
    <location>
        <begin position="863"/>
        <end position="883"/>
    </location>
</feature>
<feature type="transmembrane region" description="Helical" evidence="1">
    <location>
        <begin position="888"/>
        <end position="908"/>
    </location>
</feature>
<feature type="transmembrane region" description="Helical" evidence="1">
    <location>
        <begin position="911"/>
        <end position="931"/>
    </location>
</feature>
<feature type="transmembrane region" description="Helical" evidence="1">
    <location>
        <begin position="968"/>
        <end position="988"/>
    </location>
</feature>
<feature type="transmembrane region" description="Helical" evidence="1">
    <location>
        <begin position="998"/>
        <end position="1018"/>
    </location>
</feature>
<gene>
    <name evidence="1" type="primary">mdtB</name>
    <name type="ordered locus">ECS88_2174</name>
</gene>
<keyword id="KW-0997">Cell inner membrane</keyword>
<keyword id="KW-1003">Cell membrane</keyword>
<keyword id="KW-0472">Membrane</keyword>
<keyword id="KW-1185">Reference proteome</keyword>
<keyword id="KW-0812">Transmembrane</keyword>
<keyword id="KW-1133">Transmembrane helix</keyword>
<keyword id="KW-0813">Transport</keyword>
<organism>
    <name type="scientific">Escherichia coli O45:K1 (strain S88 / ExPEC)</name>
    <dbReference type="NCBI Taxonomy" id="585035"/>
    <lineage>
        <taxon>Bacteria</taxon>
        <taxon>Pseudomonadati</taxon>
        <taxon>Pseudomonadota</taxon>
        <taxon>Gammaproteobacteria</taxon>
        <taxon>Enterobacterales</taxon>
        <taxon>Enterobacteriaceae</taxon>
        <taxon>Escherichia</taxon>
    </lineage>
</organism>
<protein>
    <recommendedName>
        <fullName evidence="1">Multidrug resistance protein MdtB</fullName>
    </recommendedName>
    <alternativeName>
        <fullName evidence="1">Multidrug transporter MdtB</fullName>
    </alternativeName>
</protein>
<proteinExistence type="evidence at transcript level"/>
<sequence>MQVLPPSSTGGPSRLFIMRPVATTLLMVAILLAGIIGYRALPVSALPEVDYPTIQVVTLYPGASPDVMTSAVTAPLERQFGQMSGLKQMSSQSSGGASVITLQFQLTLPLDVAEQEVQAAINAATNLLPSDLPNPPVYSKVNPADPPIMTLAVTSTAMPMTQVEDMVETRVAQKISQISGVGLVTLSGGQRPAVRVKLNAQAIAALGLTSETVRTAITGANVNSAKGSLDGPSRAVTLSANDQMQSAEEYRQLIIAYQNGAPIRLGDVATVEQGAENSWLGAWANKEQAIVMNVQRQPGANIISTADSIRQMLPQLTESLPKSVKVTVLSDRTTNIRASVDDTQFELMMAIALVVMIIYLFLRNIPATIIPGVAVPLSLIGTFAVMVFLDFSINNLTLMALTIATGFVVDDAIVVIENISRYIEKGEKPLAAALKGAGEIGFTIISLTFSLIAVLIPLLFMGDIVGRLFREFAITLAVAILISAVVSLTLTPMMCARMLSQESLRKQNRFSRASEKMFDRIIAAYGRGLAKVLNHPWLTLSVALSTLLLSVLLWVFIPKGFFPVQDNGIIQGTLQAPQSSSFANMAQRQRQVADVILQDPAVQSLTSFVGVDGTNPSLNSARLQINLKPLDERDDRVQKVIARLQTAVDKVPGVDLFLQPTQDLTIDTQVSRTQYQFTLQATSLDALSTWVPQLMEKLQQLPQLSDVSSDWQDKGLVAYVNVDRDSASRLGISMADVDNALYNAFGQRLISTIYTQANQYRVVLEHNTENTPGLAALDTIRLTSSDGGVVPLSSIAKIEQRFAPLSINHLDQFPVTTISFNVPDNYSLGDAVQAIMDTEKTLNLPVDITTQFQGSTLAFQSALGSTVWLIVAAVVAMYIVLGILYESFIHPITILSTLPTAGVGALLALMIAGSELDVIAIIGIILLIGIVKKNAIMMIDFALAAEREQGMSPREAIYQACLLRFRPILMTTLAALLGALPLMLSTGVGAELRRPLGIGMVGGLIVSQVLTLFTTPVIYLLFDRLALWTKSRFARHEEEA</sequence>
<accession>B7ME87</accession>
<comment type="function">
    <text evidence="1">The MdtABC tripartite complex confers resistance against novobiocin and deoxycholate.</text>
</comment>
<comment type="subunit">
    <text evidence="1">Part of a tripartite efflux system composed of MdtA, MdtB and MdtC. MdtB forms a heteromultimer with MdtC.</text>
</comment>
<comment type="subcellular location">
    <subcellularLocation>
        <location evidence="1">Cell inner membrane</location>
        <topology evidence="1">Multi-pass membrane protein</topology>
    </subcellularLocation>
</comment>
<comment type="induction">
    <text>The mdtABC operon is transcriptionally activated by BaeR.</text>
</comment>
<comment type="similarity">
    <text evidence="1">Belongs to the resistance-nodulation-cell division (RND) (TC 2.A.6) family. MdtB subfamily.</text>
</comment>
<reference key="1">
    <citation type="journal article" date="2009" name="PLoS Genet.">
        <title>Organised genome dynamics in the Escherichia coli species results in highly diverse adaptive paths.</title>
        <authorList>
            <person name="Touchon M."/>
            <person name="Hoede C."/>
            <person name="Tenaillon O."/>
            <person name="Barbe V."/>
            <person name="Baeriswyl S."/>
            <person name="Bidet P."/>
            <person name="Bingen E."/>
            <person name="Bonacorsi S."/>
            <person name="Bouchier C."/>
            <person name="Bouvet O."/>
            <person name="Calteau A."/>
            <person name="Chiapello H."/>
            <person name="Clermont O."/>
            <person name="Cruveiller S."/>
            <person name="Danchin A."/>
            <person name="Diard M."/>
            <person name="Dossat C."/>
            <person name="Karoui M.E."/>
            <person name="Frapy E."/>
            <person name="Garry L."/>
            <person name="Ghigo J.M."/>
            <person name="Gilles A.M."/>
            <person name="Johnson J."/>
            <person name="Le Bouguenec C."/>
            <person name="Lescat M."/>
            <person name="Mangenot S."/>
            <person name="Martinez-Jehanne V."/>
            <person name="Matic I."/>
            <person name="Nassif X."/>
            <person name="Oztas S."/>
            <person name="Petit M.A."/>
            <person name="Pichon C."/>
            <person name="Rouy Z."/>
            <person name="Ruf C.S."/>
            <person name="Schneider D."/>
            <person name="Tourret J."/>
            <person name="Vacherie B."/>
            <person name="Vallenet D."/>
            <person name="Medigue C."/>
            <person name="Rocha E.P.C."/>
            <person name="Denamur E."/>
        </authorList>
    </citation>
    <scope>NUCLEOTIDE SEQUENCE [LARGE SCALE GENOMIC DNA]</scope>
    <source>
        <strain>S88 / ExPEC</strain>
    </source>
</reference>
<evidence type="ECO:0000255" key="1">
    <source>
        <dbReference type="HAMAP-Rule" id="MF_01423"/>
    </source>
</evidence>